<comment type="catalytic activity">
    <reaction evidence="1">
        <text>tRNA(Gly) + glycine + ATP = glycyl-tRNA(Gly) + AMP + diphosphate</text>
        <dbReference type="Rhea" id="RHEA:16013"/>
        <dbReference type="Rhea" id="RHEA-COMP:9664"/>
        <dbReference type="Rhea" id="RHEA-COMP:9683"/>
        <dbReference type="ChEBI" id="CHEBI:30616"/>
        <dbReference type="ChEBI" id="CHEBI:33019"/>
        <dbReference type="ChEBI" id="CHEBI:57305"/>
        <dbReference type="ChEBI" id="CHEBI:78442"/>
        <dbReference type="ChEBI" id="CHEBI:78522"/>
        <dbReference type="ChEBI" id="CHEBI:456215"/>
        <dbReference type="EC" id="6.1.1.14"/>
    </reaction>
</comment>
<comment type="subunit">
    <text evidence="1">Tetramer of two alpha and two beta subunits.</text>
</comment>
<comment type="subcellular location">
    <subcellularLocation>
        <location evidence="1">Cytoplasm</location>
    </subcellularLocation>
</comment>
<comment type="similarity">
    <text evidence="1">Belongs to the class-II aminoacyl-tRNA synthetase family.</text>
</comment>
<name>SYGB_THEP1</name>
<sequence length="672" mass="77974">MRTALLEVGLEELPASEFHSILKQLEERSTELLKAYRISSGSAEVFVGSRRFGVILKNLPERQEDFTEEKKGPPLNVAYDENGKPTKALEGFLRNNNASLENVVHREGYIYLSRVVEGKPVEEVLPDLFRDLVLGLNFRKPMRWGSGEHEYIRPVHWIVAMVDGRVLDLEIFGLRSSRISYGKRYHAGSIKIPDPERYYESLKKGFVISSHLERKKFVLEQIDEFEKRSGMKIERDEELIEEIVAITEYPRIVVGQFDRKYLELPEEIIVTAVKHHQRSFIAHKETLTNTFVAFQDGPQPPENVVKGYERVINARLEDARYYFQKDLETPLEKMNEKLKEIVFQEKLGTLYDKVERIKKISERLCEDLKLPESFTQKVLEAASICKADIASKVVYEFPELQGVMGRIYALREGINEEIATAIEDHYSEEPQTVIGSILGIADRIDTIVGNFAIGNVPTSSKDPYGLKNKADAIFRIIRKNEWDISLEELLTFASSLVGYRLSEELETFFAGRFYQFLVNELGISFDVARAVNHLWKRPLRGILSAEALQEISEKPEFQDLFVGFERVHNITKNHDSVRFDGALFEKEEEKKLMNKFYEVKEKVLKALERLNYREALQYLIELKPYIDEYFDNVFVMVKRDDLRVNRLGFLKNIDELFMMVGDMTYLVKRSQV</sequence>
<organism>
    <name type="scientific">Thermotoga petrophila (strain ATCC BAA-488 / DSM 13995 / JCM 10881 / RKU-1)</name>
    <dbReference type="NCBI Taxonomy" id="390874"/>
    <lineage>
        <taxon>Bacteria</taxon>
        <taxon>Thermotogati</taxon>
        <taxon>Thermotogota</taxon>
        <taxon>Thermotogae</taxon>
        <taxon>Thermotogales</taxon>
        <taxon>Thermotogaceae</taxon>
        <taxon>Thermotoga</taxon>
    </lineage>
</organism>
<feature type="chain" id="PRO_1000006418" description="Glycine--tRNA ligase beta subunit">
    <location>
        <begin position="1"/>
        <end position="672"/>
    </location>
</feature>
<proteinExistence type="inferred from homology"/>
<dbReference type="EC" id="6.1.1.14" evidence="1"/>
<dbReference type="EMBL" id="CP000702">
    <property type="protein sequence ID" value="ABQ46727.1"/>
    <property type="molecule type" value="Genomic_DNA"/>
</dbReference>
<dbReference type="RefSeq" id="WP_011943311.1">
    <property type="nucleotide sequence ID" value="NC_009486.1"/>
</dbReference>
<dbReference type="SMR" id="A5IKK4"/>
<dbReference type="STRING" id="390874.Tpet_0707"/>
<dbReference type="KEGG" id="tpt:Tpet_0707"/>
<dbReference type="eggNOG" id="COG0751">
    <property type="taxonomic scope" value="Bacteria"/>
</dbReference>
<dbReference type="HOGENOM" id="CLU_007220_2_2_0"/>
<dbReference type="Proteomes" id="UP000006558">
    <property type="component" value="Chromosome"/>
</dbReference>
<dbReference type="GO" id="GO:0005829">
    <property type="term" value="C:cytosol"/>
    <property type="evidence" value="ECO:0007669"/>
    <property type="project" value="TreeGrafter"/>
</dbReference>
<dbReference type="GO" id="GO:0004814">
    <property type="term" value="F:arginine-tRNA ligase activity"/>
    <property type="evidence" value="ECO:0007669"/>
    <property type="project" value="InterPro"/>
</dbReference>
<dbReference type="GO" id="GO:0005524">
    <property type="term" value="F:ATP binding"/>
    <property type="evidence" value="ECO:0007669"/>
    <property type="project" value="UniProtKB-UniRule"/>
</dbReference>
<dbReference type="GO" id="GO:0004820">
    <property type="term" value="F:glycine-tRNA ligase activity"/>
    <property type="evidence" value="ECO:0007669"/>
    <property type="project" value="UniProtKB-UniRule"/>
</dbReference>
<dbReference type="GO" id="GO:0006420">
    <property type="term" value="P:arginyl-tRNA aminoacylation"/>
    <property type="evidence" value="ECO:0007669"/>
    <property type="project" value="InterPro"/>
</dbReference>
<dbReference type="GO" id="GO:0006426">
    <property type="term" value="P:glycyl-tRNA aminoacylation"/>
    <property type="evidence" value="ECO:0007669"/>
    <property type="project" value="UniProtKB-UniRule"/>
</dbReference>
<dbReference type="HAMAP" id="MF_00255">
    <property type="entry name" value="Gly_tRNA_synth_beta"/>
    <property type="match status" value="1"/>
</dbReference>
<dbReference type="InterPro" id="IPR008909">
    <property type="entry name" value="DALR_anticod-bd"/>
</dbReference>
<dbReference type="InterPro" id="IPR015944">
    <property type="entry name" value="Gly-tRNA-synth_bsu"/>
</dbReference>
<dbReference type="InterPro" id="IPR006194">
    <property type="entry name" value="Gly-tRNA-synth_heterodimer"/>
</dbReference>
<dbReference type="InterPro" id="IPR009080">
    <property type="entry name" value="tRNAsynth_Ia_anticodon-bd"/>
</dbReference>
<dbReference type="NCBIfam" id="TIGR00211">
    <property type="entry name" value="glyS"/>
    <property type="match status" value="1"/>
</dbReference>
<dbReference type="PANTHER" id="PTHR30075:SF2">
    <property type="entry name" value="GLYCINE--TRNA LIGASE, CHLOROPLASTIC_MITOCHONDRIAL 2"/>
    <property type="match status" value="1"/>
</dbReference>
<dbReference type="PANTHER" id="PTHR30075">
    <property type="entry name" value="GLYCYL-TRNA SYNTHETASE"/>
    <property type="match status" value="1"/>
</dbReference>
<dbReference type="Pfam" id="PF05746">
    <property type="entry name" value="DALR_1"/>
    <property type="match status" value="1"/>
</dbReference>
<dbReference type="Pfam" id="PF02092">
    <property type="entry name" value="tRNA_synt_2f"/>
    <property type="match status" value="1"/>
</dbReference>
<dbReference type="PRINTS" id="PR01045">
    <property type="entry name" value="TRNASYNTHGB"/>
</dbReference>
<dbReference type="SUPFAM" id="SSF47323">
    <property type="entry name" value="Anticodon-binding domain of a subclass of class I aminoacyl-tRNA synthetases"/>
    <property type="match status" value="1"/>
</dbReference>
<dbReference type="SUPFAM" id="SSF109604">
    <property type="entry name" value="HD-domain/PDEase-like"/>
    <property type="match status" value="1"/>
</dbReference>
<dbReference type="PROSITE" id="PS50861">
    <property type="entry name" value="AA_TRNA_LIGASE_II_GLYAB"/>
    <property type="match status" value="1"/>
</dbReference>
<evidence type="ECO:0000255" key="1">
    <source>
        <dbReference type="HAMAP-Rule" id="MF_00255"/>
    </source>
</evidence>
<accession>A5IKK4</accession>
<reference key="1">
    <citation type="submission" date="2007-05" db="EMBL/GenBank/DDBJ databases">
        <title>Complete sequence of Thermotoga petrophila RKU-1.</title>
        <authorList>
            <consortium name="US DOE Joint Genome Institute"/>
            <person name="Copeland A."/>
            <person name="Lucas S."/>
            <person name="Lapidus A."/>
            <person name="Barry K."/>
            <person name="Glavina del Rio T."/>
            <person name="Dalin E."/>
            <person name="Tice H."/>
            <person name="Pitluck S."/>
            <person name="Sims D."/>
            <person name="Brettin T."/>
            <person name="Bruce D."/>
            <person name="Detter J.C."/>
            <person name="Han C."/>
            <person name="Tapia R."/>
            <person name="Schmutz J."/>
            <person name="Larimer F."/>
            <person name="Land M."/>
            <person name="Hauser L."/>
            <person name="Kyrpides N."/>
            <person name="Mikhailova N."/>
            <person name="Nelson K."/>
            <person name="Gogarten J.P."/>
            <person name="Noll K."/>
            <person name="Richardson P."/>
        </authorList>
    </citation>
    <scope>NUCLEOTIDE SEQUENCE [LARGE SCALE GENOMIC DNA]</scope>
    <source>
        <strain>ATCC BAA-488 / DSM 13995 / JCM 10881 / RKU-1</strain>
    </source>
</reference>
<protein>
    <recommendedName>
        <fullName evidence="1">Glycine--tRNA ligase beta subunit</fullName>
        <ecNumber evidence="1">6.1.1.14</ecNumber>
    </recommendedName>
    <alternativeName>
        <fullName evidence="1">Glycyl-tRNA synthetase beta subunit</fullName>
        <shortName evidence="1">GlyRS</shortName>
    </alternativeName>
</protein>
<gene>
    <name evidence="1" type="primary">glyS</name>
    <name type="ordered locus">Tpet_0707</name>
</gene>
<keyword id="KW-0030">Aminoacyl-tRNA synthetase</keyword>
<keyword id="KW-0067">ATP-binding</keyword>
<keyword id="KW-0963">Cytoplasm</keyword>
<keyword id="KW-0436">Ligase</keyword>
<keyword id="KW-0547">Nucleotide-binding</keyword>
<keyword id="KW-0648">Protein biosynthesis</keyword>